<name>NADK_STRP3</name>
<gene>
    <name evidence="1" type="primary">nadK</name>
    <name type="ordered locus">SpyM3_0785</name>
</gene>
<protein>
    <recommendedName>
        <fullName evidence="1">NAD kinase</fullName>
        <ecNumber evidence="1">2.7.1.23</ecNumber>
    </recommendedName>
    <alternativeName>
        <fullName evidence="1">ATP-dependent NAD kinase</fullName>
    </alternativeName>
</protein>
<keyword id="KW-0067">ATP-binding</keyword>
<keyword id="KW-0963">Cytoplasm</keyword>
<keyword id="KW-0418">Kinase</keyword>
<keyword id="KW-0520">NAD</keyword>
<keyword id="KW-0521">NADP</keyword>
<keyword id="KW-0547">Nucleotide-binding</keyword>
<keyword id="KW-0808">Transferase</keyword>
<proteinExistence type="inferred from homology"/>
<sequence length="278" mass="31376">MTQMNYTGKVKRVAIIANGKYQSKRVASKLFSVFKDDPDFYLSKKNPDIVISIGGDGMLLSAFHMYEKELDKVRFVGIHTGHLGFYTDYRDFEVDKLIDNLRKDKGEQISYPILKVAITLDDGRVVKARALNEATVKRIEKTMVADVIINHVKFESFRGDGISVSTPTGSTAYNKSLGGAVLHPTIEALQLTEISSLNNRVFRTLGSSIIIPKKDKIELVPKRLGIYTISIDNKTYQLKNVTKVEYFIDDEKIHFVSSPSHTSFWERVKDAFIGEIDS</sequence>
<evidence type="ECO:0000255" key="1">
    <source>
        <dbReference type="HAMAP-Rule" id="MF_00361"/>
    </source>
</evidence>
<feature type="chain" id="PRO_0000120673" description="NAD kinase">
    <location>
        <begin position="1"/>
        <end position="278"/>
    </location>
</feature>
<feature type="active site" description="Proton acceptor" evidence="1">
    <location>
        <position position="56"/>
    </location>
</feature>
<feature type="binding site" evidence="1">
    <location>
        <begin position="56"/>
        <end position="57"/>
    </location>
    <ligand>
        <name>NAD(+)</name>
        <dbReference type="ChEBI" id="CHEBI:57540"/>
    </ligand>
</feature>
<feature type="binding site" evidence="1">
    <location>
        <begin position="132"/>
        <end position="133"/>
    </location>
    <ligand>
        <name>NAD(+)</name>
        <dbReference type="ChEBI" id="CHEBI:57540"/>
    </ligand>
</feature>
<feature type="binding site" evidence="1">
    <location>
        <position position="158"/>
    </location>
    <ligand>
        <name>NAD(+)</name>
        <dbReference type="ChEBI" id="CHEBI:57540"/>
    </ligand>
</feature>
<feature type="binding site" evidence="1">
    <location>
        <position position="160"/>
    </location>
    <ligand>
        <name>NAD(+)</name>
        <dbReference type="ChEBI" id="CHEBI:57540"/>
    </ligand>
</feature>
<feature type="binding site" evidence="1">
    <location>
        <begin position="171"/>
        <end position="176"/>
    </location>
    <ligand>
        <name>NAD(+)</name>
        <dbReference type="ChEBI" id="CHEBI:57540"/>
    </ligand>
</feature>
<reference key="1">
    <citation type="journal article" date="2002" name="Proc. Natl. Acad. Sci. U.S.A.">
        <title>Genome sequence of a serotype M3 strain of group A Streptococcus: phage-encoded toxins, the high-virulence phenotype, and clone emergence.</title>
        <authorList>
            <person name="Beres S.B."/>
            <person name="Sylva G.L."/>
            <person name="Barbian K.D."/>
            <person name="Lei B."/>
            <person name="Hoff J.S."/>
            <person name="Mammarella N.D."/>
            <person name="Liu M.-Y."/>
            <person name="Smoot J.C."/>
            <person name="Porcella S.F."/>
            <person name="Parkins L.D."/>
            <person name="Campbell D.S."/>
            <person name="Smith T.M."/>
            <person name="McCormick J.K."/>
            <person name="Leung D.Y.M."/>
            <person name="Schlievert P.M."/>
            <person name="Musser J.M."/>
        </authorList>
    </citation>
    <scope>NUCLEOTIDE SEQUENCE [LARGE SCALE GENOMIC DNA]</scope>
    <source>
        <strain>ATCC BAA-595 / MGAS315</strain>
    </source>
</reference>
<comment type="function">
    <text evidence="1">Involved in the regulation of the intracellular balance of NAD and NADP, and is a key enzyme in the biosynthesis of NADP. Catalyzes specifically the phosphorylation on 2'-hydroxyl of the adenosine moiety of NAD to yield NADP.</text>
</comment>
<comment type="catalytic activity">
    <reaction evidence="1">
        <text>NAD(+) + ATP = ADP + NADP(+) + H(+)</text>
        <dbReference type="Rhea" id="RHEA:18629"/>
        <dbReference type="ChEBI" id="CHEBI:15378"/>
        <dbReference type="ChEBI" id="CHEBI:30616"/>
        <dbReference type="ChEBI" id="CHEBI:57540"/>
        <dbReference type="ChEBI" id="CHEBI:58349"/>
        <dbReference type="ChEBI" id="CHEBI:456216"/>
        <dbReference type="EC" id="2.7.1.23"/>
    </reaction>
</comment>
<comment type="cofactor">
    <cofactor evidence="1">
        <name>a divalent metal cation</name>
        <dbReference type="ChEBI" id="CHEBI:60240"/>
    </cofactor>
</comment>
<comment type="subcellular location">
    <subcellularLocation>
        <location evidence="1">Cytoplasm</location>
    </subcellularLocation>
</comment>
<comment type="similarity">
    <text evidence="1">Belongs to the NAD kinase family.</text>
</comment>
<accession>P0DD16</accession>
<accession>P65782</accession>
<accession>Q99ZQ7</accession>
<organism>
    <name type="scientific">Streptococcus pyogenes serotype M3 (strain ATCC BAA-595 / MGAS315)</name>
    <dbReference type="NCBI Taxonomy" id="198466"/>
    <lineage>
        <taxon>Bacteria</taxon>
        <taxon>Bacillati</taxon>
        <taxon>Bacillota</taxon>
        <taxon>Bacilli</taxon>
        <taxon>Lactobacillales</taxon>
        <taxon>Streptococcaceae</taxon>
        <taxon>Streptococcus</taxon>
    </lineage>
</organism>
<dbReference type="EC" id="2.7.1.23" evidence="1"/>
<dbReference type="EMBL" id="AE014074">
    <property type="protein sequence ID" value="AAM79392.1"/>
    <property type="molecule type" value="Genomic_DNA"/>
</dbReference>
<dbReference type="RefSeq" id="WP_002993124.1">
    <property type="nucleotide sequence ID" value="NC_004070.1"/>
</dbReference>
<dbReference type="SMR" id="P0DD16"/>
<dbReference type="KEGG" id="spg:SpyM3_0785"/>
<dbReference type="HOGENOM" id="CLU_008831_0_3_9"/>
<dbReference type="Proteomes" id="UP000000564">
    <property type="component" value="Chromosome"/>
</dbReference>
<dbReference type="GO" id="GO:0005737">
    <property type="term" value="C:cytoplasm"/>
    <property type="evidence" value="ECO:0007669"/>
    <property type="project" value="UniProtKB-SubCell"/>
</dbReference>
<dbReference type="GO" id="GO:0005524">
    <property type="term" value="F:ATP binding"/>
    <property type="evidence" value="ECO:0007669"/>
    <property type="project" value="UniProtKB-KW"/>
</dbReference>
<dbReference type="GO" id="GO:0046872">
    <property type="term" value="F:metal ion binding"/>
    <property type="evidence" value="ECO:0007669"/>
    <property type="project" value="UniProtKB-UniRule"/>
</dbReference>
<dbReference type="GO" id="GO:0051287">
    <property type="term" value="F:NAD binding"/>
    <property type="evidence" value="ECO:0007669"/>
    <property type="project" value="UniProtKB-ARBA"/>
</dbReference>
<dbReference type="GO" id="GO:0003951">
    <property type="term" value="F:NAD+ kinase activity"/>
    <property type="evidence" value="ECO:0007669"/>
    <property type="project" value="UniProtKB-UniRule"/>
</dbReference>
<dbReference type="GO" id="GO:0019674">
    <property type="term" value="P:NAD metabolic process"/>
    <property type="evidence" value="ECO:0007669"/>
    <property type="project" value="InterPro"/>
</dbReference>
<dbReference type="GO" id="GO:0006741">
    <property type="term" value="P:NADP biosynthetic process"/>
    <property type="evidence" value="ECO:0007669"/>
    <property type="project" value="UniProtKB-UniRule"/>
</dbReference>
<dbReference type="Gene3D" id="3.40.50.10330">
    <property type="entry name" value="Probable inorganic polyphosphate/atp-NAD kinase, domain 1"/>
    <property type="match status" value="1"/>
</dbReference>
<dbReference type="Gene3D" id="2.60.200.30">
    <property type="entry name" value="Probable inorganic polyphosphate/atp-NAD kinase, domain 2"/>
    <property type="match status" value="1"/>
</dbReference>
<dbReference type="HAMAP" id="MF_00361">
    <property type="entry name" value="NAD_kinase"/>
    <property type="match status" value="1"/>
</dbReference>
<dbReference type="InterPro" id="IPR017438">
    <property type="entry name" value="ATP-NAD_kinase_N"/>
</dbReference>
<dbReference type="InterPro" id="IPR017437">
    <property type="entry name" value="ATP-NAD_kinase_PpnK-typ_C"/>
</dbReference>
<dbReference type="InterPro" id="IPR016064">
    <property type="entry name" value="NAD/diacylglycerol_kinase_sf"/>
</dbReference>
<dbReference type="InterPro" id="IPR002504">
    <property type="entry name" value="NADK"/>
</dbReference>
<dbReference type="NCBIfam" id="NF003424">
    <property type="entry name" value="PRK04885.1"/>
    <property type="match status" value="1"/>
</dbReference>
<dbReference type="PANTHER" id="PTHR20275">
    <property type="entry name" value="NAD KINASE"/>
    <property type="match status" value="1"/>
</dbReference>
<dbReference type="PANTHER" id="PTHR20275:SF0">
    <property type="entry name" value="NAD KINASE"/>
    <property type="match status" value="1"/>
</dbReference>
<dbReference type="Pfam" id="PF01513">
    <property type="entry name" value="NAD_kinase"/>
    <property type="match status" value="1"/>
</dbReference>
<dbReference type="Pfam" id="PF20143">
    <property type="entry name" value="NAD_kinase_C"/>
    <property type="match status" value="1"/>
</dbReference>
<dbReference type="SUPFAM" id="SSF111331">
    <property type="entry name" value="NAD kinase/diacylglycerol kinase-like"/>
    <property type="match status" value="1"/>
</dbReference>